<keyword id="KW-0067">ATP-binding</keyword>
<keyword id="KW-0119">Carbohydrate metabolism</keyword>
<keyword id="KW-0963">Cytoplasm</keyword>
<keyword id="KW-0299">Galactose metabolism</keyword>
<keyword id="KW-0418">Kinase</keyword>
<keyword id="KW-0460">Magnesium</keyword>
<keyword id="KW-0479">Metal-binding</keyword>
<keyword id="KW-0547">Nucleotide-binding</keyword>
<keyword id="KW-0808">Transferase</keyword>
<accession>B9K9C8</accession>
<protein>
    <recommendedName>
        <fullName evidence="1">Galactokinase</fullName>
        <ecNumber evidence="1">2.7.1.6</ecNumber>
    </recommendedName>
    <alternativeName>
        <fullName evidence="1">Galactose kinase</fullName>
    </alternativeName>
</protein>
<proteinExistence type="inferred from homology"/>
<name>GAL1_THENN</name>
<reference key="1">
    <citation type="submission" date="2007-11" db="EMBL/GenBank/DDBJ databases">
        <title>The genome sequence of the hyperthermophilic bacterium Thermotoga neapolitana.</title>
        <authorList>
            <person name="Lim S.K."/>
            <person name="Kim J.S."/>
            <person name="Cha S.H."/>
            <person name="Park B.C."/>
            <person name="Lee D.S."/>
            <person name="Tae H.S."/>
            <person name="Kim S.-J."/>
            <person name="Kim J.J."/>
            <person name="Park K.J."/>
            <person name="Lee S.Y."/>
        </authorList>
    </citation>
    <scope>NUCLEOTIDE SEQUENCE [LARGE SCALE GENOMIC DNA]</scope>
    <source>
        <strain>ATCC 49049 / DSM 4359 / NBRC 107923 / NS-E</strain>
    </source>
</reference>
<organism>
    <name type="scientific">Thermotoga neapolitana (strain ATCC 49049 / DSM 4359 / NBRC 107923 / NS-E)</name>
    <dbReference type="NCBI Taxonomy" id="309803"/>
    <lineage>
        <taxon>Bacteria</taxon>
        <taxon>Thermotogati</taxon>
        <taxon>Thermotogota</taxon>
        <taxon>Thermotogae</taxon>
        <taxon>Thermotogales</taxon>
        <taxon>Thermotogaceae</taxon>
        <taxon>Thermotoga</taxon>
    </lineage>
</organism>
<sequence length="350" mass="39771">MRVKAPGRINIIGEHTDYNDGYVLPFAVNRFVFLTIEDSGKFVFHSENMNETVEMEKIEKLNRWTDYISGVIKAFEKRGYKVSPVKISVSSNLPMGAGLSSSAALEMATAYAISEHFGFHLPKLELVKIAREAEVEFVGVRCGIMDQFTSAFGKKDHAIFLDTMTLEYEYVPLKLEGYEINLVDSNVKHELSSSEYNKRRQECEEVLRVLGKRSFREVTKEDLKKLPDVLKKRAQHVLEENERVLKSVQALKEGDFETLGRLLFSSHESLRDLYEVSCEETDFIVDFLKGREGILGARMVGGGFGGGVIVLSKKGAFEKIKEELKNAYRDRFKIELTFHEIESADGVQKI</sequence>
<dbReference type="EC" id="2.7.1.6" evidence="1"/>
<dbReference type="EMBL" id="CP000916">
    <property type="protein sequence ID" value="ACM23561.1"/>
    <property type="molecule type" value="Genomic_DNA"/>
</dbReference>
<dbReference type="RefSeq" id="WP_015919855.1">
    <property type="nucleotide sequence ID" value="NC_011978.1"/>
</dbReference>
<dbReference type="SMR" id="B9K9C8"/>
<dbReference type="STRING" id="309803.CTN_1385"/>
<dbReference type="KEGG" id="tna:CTN_1385"/>
<dbReference type="eggNOG" id="COG0153">
    <property type="taxonomic scope" value="Bacteria"/>
</dbReference>
<dbReference type="HOGENOM" id="CLU_017814_2_1_0"/>
<dbReference type="UniPathway" id="UPA00214"/>
<dbReference type="Proteomes" id="UP000000445">
    <property type="component" value="Chromosome"/>
</dbReference>
<dbReference type="GO" id="GO:0005829">
    <property type="term" value="C:cytosol"/>
    <property type="evidence" value="ECO:0007669"/>
    <property type="project" value="TreeGrafter"/>
</dbReference>
<dbReference type="GO" id="GO:0005524">
    <property type="term" value="F:ATP binding"/>
    <property type="evidence" value="ECO:0007669"/>
    <property type="project" value="UniProtKB-UniRule"/>
</dbReference>
<dbReference type="GO" id="GO:0004335">
    <property type="term" value="F:galactokinase activity"/>
    <property type="evidence" value="ECO:0007669"/>
    <property type="project" value="UniProtKB-UniRule"/>
</dbReference>
<dbReference type="GO" id="GO:0000287">
    <property type="term" value="F:magnesium ion binding"/>
    <property type="evidence" value="ECO:0007669"/>
    <property type="project" value="UniProtKB-UniRule"/>
</dbReference>
<dbReference type="GO" id="GO:0006012">
    <property type="term" value="P:galactose metabolic process"/>
    <property type="evidence" value="ECO:0007669"/>
    <property type="project" value="UniProtKB-UniRule"/>
</dbReference>
<dbReference type="FunFam" id="3.30.230.10:FF:000126">
    <property type="entry name" value="Galactokinase"/>
    <property type="match status" value="1"/>
</dbReference>
<dbReference type="FunFam" id="3.30.70.890:FF:000001">
    <property type="entry name" value="Galactokinase"/>
    <property type="match status" value="1"/>
</dbReference>
<dbReference type="Gene3D" id="3.30.230.10">
    <property type="match status" value="1"/>
</dbReference>
<dbReference type="Gene3D" id="3.30.70.890">
    <property type="entry name" value="GHMP kinase, C-terminal domain"/>
    <property type="match status" value="1"/>
</dbReference>
<dbReference type="HAMAP" id="MF_00246">
    <property type="entry name" value="Galactokinase"/>
    <property type="match status" value="1"/>
</dbReference>
<dbReference type="InterPro" id="IPR000705">
    <property type="entry name" value="Galactokinase"/>
</dbReference>
<dbReference type="InterPro" id="IPR022963">
    <property type="entry name" value="Galactokinase_bac"/>
</dbReference>
<dbReference type="InterPro" id="IPR019741">
    <property type="entry name" value="Galactokinase_CS"/>
</dbReference>
<dbReference type="InterPro" id="IPR019539">
    <property type="entry name" value="GalKase_N"/>
</dbReference>
<dbReference type="InterPro" id="IPR013750">
    <property type="entry name" value="GHMP_kinase_C_dom"/>
</dbReference>
<dbReference type="InterPro" id="IPR036554">
    <property type="entry name" value="GHMP_kinase_C_sf"/>
</dbReference>
<dbReference type="InterPro" id="IPR006204">
    <property type="entry name" value="GHMP_kinase_N_dom"/>
</dbReference>
<dbReference type="InterPro" id="IPR006203">
    <property type="entry name" value="GHMP_knse_ATP-bd_CS"/>
</dbReference>
<dbReference type="InterPro" id="IPR006206">
    <property type="entry name" value="Mevalonate/galactokinase"/>
</dbReference>
<dbReference type="InterPro" id="IPR020568">
    <property type="entry name" value="Ribosomal_Su5_D2-typ_SF"/>
</dbReference>
<dbReference type="InterPro" id="IPR014721">
    <property type="entry name" value="Ribsml_uS5_D2-typ_fold_subgr"/>
</dbReference>
<dbReference type="NCBIfam" id="TIGR00131">
    <property type="entry name" value="gal_kin"/>
    <property type="match status" value="1"/>
</dbReference>
<dbReference type="NCBIfam" id="NF003006">
    <property type="entry name" value="PRK03817.1"/>
    <property type="match status" value="1"/>
</dbReference>
<dbReference type="PANTHER" id="PTHR10457:SF7">
    <property type="entry name" value="GALACTOKINASE-RELATED"/>
    <property type="match status" value="1"/>
</dbReference>
<dbReference type="PANTHER" id="PTHR10457">
    <property type="entry name" value="MEVALONATE KINASE/GALACTOKINASE"/>
    <property type="match status" value="1"/>
</dbReference>
<dbReference type="Pfam" id="PF10509">
    <property type="entry name" value="GalKase_gal_bdg"/>
    <property type="match status" value="1"/>
</dbReference>
<dbReference type="Pfam" id="PF08544">
    <property type="entry name" value="GHMP_kinases_C"/>
    <property type="match status" value="1"/>
</dbReference>
<dbReference type="Pfam" id="PF00288">
    <property type="entry name" value="GHMP_kinases_N"/>
    <property type="match status" value="1"/>
</dbReference>
<dbReference type="PIRSF" id="PIRSF000530">
    <property type="entry name" value="Galactokinase"/>
    <property type="match status" value="1"/>
</dbReference>
<dbReference type="PRINTS" id="PR00473">
    <property type="entry name" value="GALCTOKINASE"/>
</dbReference>
<dbReference type="PRINTS" id="PR00959">
    <property type="entry name" value="MEVGALKINASE"/>
</dbReference>
<dbReference type="SUPFAM" id="SSF55060">
    <property type="entry name" value="GHMP Kinase, C-terminal domain"/>
    <property type="match status" value="1"/>
</dbReference>
<dbReference type="SUPFAM" id="SSF54211">
    <property type="entry name" value="Ribosomal protein S5 domain 2-like"/>
    <property type="match status" value="1"/>
</dbReference>
<dbReference type="PROSITE" id="PS00106">
    <property type="entry name" value="GALACTOKINASE"/>
    <property type="match status" value="1"/>
</dbReference>
<dbReference type="PROSITE" id="PS00627">
    <property type="entry name" value="GHMP_KINASES_ATP"/>
    <property type="match status" value="1"/>
</dbReference>
<comment type="function">
    <text evidence="1">Catalyzes the transfer of the gamma-phosphate of ATP to D-galactose to form alpha-D-galactose-1-phosphate (Gal-1-P).</text>
</comment>
<comment type="catalytic activity">
    <reaction evidence="1">
        <text>alpha-D-galactose + ATP = alpha-D-galactose 1-phosphate + ADP + H(+)</text>
        <dbReference type="Rhea" id="RHEA:13553"/>
        <dbReference type="ChEBI" id="CHEBI:15378"/>
        <dbReference type="ChEBI" id="CHEBI:28061"/>
        <dbReference type="ChEBI" id="CHEBI:30616"/>
        <dbReference type="ChEBI" id="CHEBI:58336"/>
        <dbReference type="ChEBI" id="CHEBI:456216"/>
        <dbReference type="EC" id="2.7.1.6"/>
    </reaction>
</comment>
<comment type="pathway">
    <text evidence="1">Carbohydrate metabolism; galactose metabolism.</text>
</comment>
<comment type="subcellular location">
    <subcellularLocation>
        <location evidence="1">Cytoplasm</location>
    </subcellularLocation>
</comment>
<comment type="similarity">
    <text evidence="1">Belongs to the GHMP kinase family. GalK subfamily.</text>
</comment>
<gene>
    <name evidence="1" type="primary">galK</name>
    <name type="ordered locus">CTN_1385</name>
</gene>
<feature type="chain" id="PRO_1000125383" description="Galactokinase">
    <location>
        <begin position="1"/>
        <end position="350"/>
    </location>
</feature>
<feature type="active site" description="Proton acceptor" evidence="1">
    <location>
        <position position="146"/>
    </location>
</feature>
<feature type="binding site" evidence="1">
    <location>
        <begin position="14"/>
        <end position="17"/>
    </location>
    <ligand>
        <name>substrate</name>
    </ligand>
</feature>
<feature type="binding site" evidence="1">
    <location>
        <position position="46"/>
    </location>
    <ligand>
        <name>ATP</name>
        <dbReference type="ChEBI" id="CHEBI:30616"/>
    </ligand>
</feature>
<feature type="binding site" evidence="1">
    <location>
        <begin position="96"/>
        <end position="102"/>
    </location>
    <ligand>
        <name>ATP</name>
        <dbReference type="ChEBI" id="CHEBI:30616"/>
    </ligand>
</feature>
<feature type="binding site" evidence="1">
    <location>
        <position position="102"/>
    </location>
    <ligand>
        <name>Mg(2+)</name>
        <dbReference type="ChEBI" id="CHEBI:18420"/>
    </ligand>
</feature>
<feature type="binding site" evidence="1">
    <location>
        <position position="134"/>
    </location>
    <ligand>
        <name>Mg(2+)</name>
        <dbReference type="ChEBI" id="CHEBI:18420"/>
    </ligand>
</feature>
<feature type="binding site" evidence="1">
    <location>
        <position position="196"/>
    </location>
    <ligand>
        <name>substrate</name>
    </ligand>
</feature>
<feature type="site" description="Transition state stabilizer" evidence="1">
    <location>
        <position position="8"/>
    </location>
</feature>
<evidence type="ECO:0000255" key="1">
    <source>
        <dbReference type="HAMAP-Rule" id="MF_00246"/>
    </source>
</evidence>